<reference key="1">
    <citation type="journal article" date="2009" name="PLoS Genet.">
        <title>Organised genome dynamics in the Escherichia coli species results in highly diverse adaptive paths.</title>
        <authorList>
            <person name="Touchon M."/>
            <person name="Hoede C."/>
            <person name="Tenaillon O."/>
            <person name="Barbe V."/>
            <person name="Baeriswyl S."/>
            <person name="Bidet P."/>
            <person name="Bingen E."/>
            <person name="Bonacorsi S."/>
            <person name="Bouchier C."/>
            <person name="Bouvet O."/>
            <person name="Calteau A."/>
            <person name="Chiapello H."/>
            <person name="Clermont O."/>
            <person name="Cruveiller S."/>
            <person name="Danchin A."/>
            <person name="Diard M."/>
            <person name="Dossat C."/>
            <person name="Karoui M.E."/>
            <person name="Frapy E."/>
            <person name="Garry L."/>
            <person name="Ghigo J.M."/>
            <person name="Gilles A.M."/>
            <person name="Johnson J."/>
            <person name="Le Bouguenec C."/>
            <person name="Lescat M."/>
            <person name="Mangenot S."/>
            <person name="Martinez-Jehanne V."/>
            <person name="Matic I."/>
            <person name="Nassif X."/>
            <person name="Oztas S."/>
            <person name="Petit M.A."/>
            <person name="Pichon C."/>
            <person name="Rouy Z."/>
            <person name="Ruf C.S."/>
            <person name="Schneider D."/>
            <person name="Tourret J."/>
            <person name="Vacherie B."/>
            <person name="Vallenet D."/>
            <person name="Medigue C."/>
            <person name="Rocha E.P.C."/>
            <person name="Denamur E."/>
        </authorList>
    </citation>
    <scope>NUCLEOTIDE SEQUENCE [LARGE SCALE GENOMIC DNA]</scope>
    <source>
        <strain>ATCC 35469 / DSM 13698 / BCRC 15582 / CCUG 18766 / IAM 14443 / JCM 21226 / LMG 7866 / NBRC 102419 / NCTC 12128 / CDC 0568-73</strain>
    </source>
</reference>
<evidence type="ECO:0000255" key="1">
    <source>
        <dbReference type="HAMAP-Rule" id="MF_01903"/>
    </source>
</evidence>
<name>XGPT_ESCF3</name>
<dbReference type="EC" id="2.4.2.-" evidence="1"/>
<dbReference type="EC" id="2.4.2.22" evidence="1"/>
<dbReference type="EMBL" id="CU928158">
    <property type="protein sequence ID" value="CAQ90235.1"/>
    <property type="molecule type" value="Genomic_DNA"/>
</dbReference>
<dbReference type="RefSeq" id="WP_001291987.1">
    <property type="nucleotide sequence ID" value="NC_011740.1"/>
</dbReference>
<dbReference type="SMR" id="B7LNG2"/>
<dbReference type="GeneID" id="75056223"/>
<dbReference type="KEGG" id="efe:EFER_2740"/>
<dbReference type="HOGENOM" id="CLU_080904_3_0_6"/>
<dbReference type="OrthoDB" id="9789690at2"/>
<dbReference type="UniPathway" id="UPA00602">
    <property type="reaction ID" value="UER00658"/>
</dbReference>
<dbReference type="UniPathway" id="UPA00909">
    <property type="reaction ID" value="UER00887"/>
</dbReference>
<dbReference type="Proteomes" id="UP000000745">
    <property type="component" value="Chromosome"/>
</dbReference>
<dbReference type="GO" id="GO:0005829">
    <property type="term" value="C:cytosol"/>
    <property type="evidence" value="ECO:0007669"/>
    <property type="project" value="TreeGrafter"/>
</dbReference>
<dbReference type="GO" id="GO:0005886">
    <property type="term" value="C:plasma membrane"/>
    <property type="evidence" value="ECO:0007669"/>
    <property type="project" value="UniProtKB-SubCell"/>
</dbReference>
<dbReference type="GO" id="GO:0052657">
    <property type="term" value="F:guanine phosphoribosyltransferase activity"/>
    <property type="evidence" value="ECO:0007669"/>
    <property type="project" value="RHEA"/>
</dbReference>
<dbReference type="GO" id="GO:0004422">
    <property type="term" value="F:hypoxanthine phosphoribosyltransferase activity"/>
    <property type="evidence" value="ECO:0007669"/>
    <property type="project" value="TreeGrafter"/>
</dbReference>
<dbReference type="GO" id="GO:0000287">
    <property type="term" value="F:magnesium ion binding"/>
    <property type="evidence" value="ECO:0007669"/>
    <property type="project" value="UniProtKB-UniRule"/>
</dbReference>
<dbReference type="GO" id="GO:0000310">
    <property type="term" value="F:xanthine phosphoribosyltransferase activity"/>
    <property type="evidence" value="ECO:0007669"/>
    <property type="project" value="UniProtKB-UniRule"/>
</dbReference>
<dbReference type="GO" id="GO:0032263">
    <property type="term" value="P:GMP salvage"/>
    <property type="evidence" value="ECO:0007669"/>
    <property type="project" value="UniProtKB-UniRule"/>
</dbReference>
<dbReference type="GO" id="GO:0032264">
    <property type="term" value="P:IMP salvage"/>
    <property type="evidence" value="ECO:0007669"/>
    <property type="project" value="TreeGrafter"/>
</dbReference>
<dbReference type="GO" id="GO:0006166">
    <property type="term" value="P:purine ribonucleoside salvage"/>
    <property type="evidence" value="ECO:0007669"/>
    <property type="project" value="UniProtKB-KW"/>
</dbReference>
<dbReference type="GO" id="GO:0032265">
    <property type="term" value="P:XMP salvage"/>
    <property type="evidence" value="ECO:0007669"/>
    <property type="project" value="UniProtKB-UniRule"/>
</dbReference>
<dbReference type="CDD" id="cd06223">
    <property type="entry name" value="PRTases_typeI"/>
    <property type="match status" value="1"/>
</dbReference>
<dbReference type="FunFam" id="3.40.50.2020:FF:000009">
    <property type="entry name" value="Xanthine phosphoribosyltransferase"/>
    <property type="match status" value="1"/>
</dbReference>
<dbReference type="Gene3D" id="3.40.50.2020">
    <property type="match status" value="1"/>
</dbReference>
<dbReference type="HAMAP" id="MF_01903">
    <property type="entry name" value="XGPRT"/>
    <property type="match status" value="1"/>
</dbReference>
<dbReference type="InterPro" id="IPR000836">
    <property type="entry name" value="PRibTrfase_dom"/>
</dbReference>
<dbReference type="InterPro" id="IPR029057">
    <property type="entry name" value="PRTase-like"/>
</dbReference>
<dbReference type="InterPro" id="IPR023747">
    <property type="entry name" value="Xanthine_Guanine_PRibTrfase"/>
</dbReference>
<dbReference type="NCBIfam" id="NF006613">
    <property type="entry name" value="PRK09177.1"/>
    <property type="match status" value="1"/>
</dbReference>
<dbReference type="PANTHER" id="PTHR39563">
    <property type="entry name" value="XANTHINE PHOSPHORIBOSYLTRANSFERASE"/>
    <property type="match status" value="1"/>
</dbReference>
<dbReference type="PANTHER" id="PTHR39563:SF1">
    <property type="entry name" value="XANTHINE-GUANINE PHOSPHORIBOSYLTRANSFERASE"/>
    <property type="match status" value="1"/>
</dbReference>
<dbReference type="Pfam" id="PF00156">
    <property type="entry name" value="Pribosyltran"/>
    <property type="match status" value="1"/>
</dbReference>
<dbReference type="SUPFAM" id="SSF53271">
    <property type="entry name" value="PRTase-like"/>
    <property type="match status" value="1"/>
</dbReference>
<dbReference type="PROSITE" id="PS00103">
    <property type="entry name" value="PUR_PYR_PR_TRANSFER"/>
    <property type="match status" value="1"/>
</dbReference>
<protein>
    <recommendedName>
        <fullName evidence="1">Xanthine-guanine phosphoribosyltransferase</fullName>
        <shortName evidence="1">XGPRT</shortName>
        <ecNumber evidence="1">2.4.2.-</ecNumber>
        <ecNumber evidence="1">2.4.2.22</ecNumber>
    </recommendedName>
    <alternativeName>
        <fullName evidence="1">Xanthine phosphoribosyltransferase</fullName>
    </alternativeName>
</protein>
<proteinExistence type="inferred from homology"/>
<sequence>MSEKYIVTWDMLQIHARKLASRLMPSEQWKGIIAVSRGGLVPGALLARELGIRHVDTVCISSYDHDNQRELKVLKRAEGDGEGFIIIDDLVDTGGTAVAIREMYPKAHFVTIFAKPAGRPLVDDYVIDIPQNTWIEQPWDMGVVFVPPISGR</sequence>
<feature type="chain" id="PRO_1000188749" description="Xanthine-guanine phosphoribosyltransferase">
    <location>
        <begin position="1"/>
        <end position="152"/>
    </location>
</feature>
<feature type="binding site" evidence="1">
    <location>
        <begin position="37"/>
        <end position="38"/>
    </location>
    <ligand>
        <name>5-phospho-alpha-D-ribose 1-diphosphate</name>
        <dbReference type="ChEBI" id="CHEBI:58017"/>
    </ligand>
</feature>
<feature type="binding site" evidence="1">
    <location>
        <position position="69"/>
    </location>
    <ligand>
        <name>5-phospho-alpha-D-ribose 1-diphosphate</name>
        <dbReference type="ChEBI" id="CHEBI:58017"/>
    </ligand>
</feature>
<feature type="binding site" evidence="1">
    <location>
        <position position="69"/>
    </location>
    <ligand>
        <name>GMP</name>
        <dbReference type="ChEBI" id="CHEBI:58115"/>
    </ligand>
</feature>
<feature type="binding site" evidence="1">
    <location>
        <begin position="88"/>
        <end position="96"/>
    </location>
    <ligand>
        <name>5-phospho-alpha-D-ribose 1-diphosphate</name>
        <dbReference type="ChEBI" id="CHEBI:58017"/>
    </ligand>
</feature>
<feature type="binding site" evidence="1">
    <location>
        <position position="89"/>
    </location>
    <ligand>
        <name>Mg(2+)</name>
        <dbReference type="ChEBI" id="CHEBI:18420"/>
    </ligand>
</feature>
<feature type="binding site" evidence="1">
    <location>
        <begin position="92"/>
        <end position="96"/>
    </location>
    <ligand>
        <name>GMP</name>
        <dbReference type="ChEBI" id="CHEBI:58115"/>
    </ligand>
</feature>
<feature type="binding site" evidence="1">
    <location>
        <position position="92"/>
    </location>
    <ligand>
        <name>guanine</name>
        <dbReference type="ChEBI" id="CHEBI:16235"/>
    </ligand>
</feature>
<feature type="binding site" evidence="1">
    <location>
        <position position="92"/>
    </location>
    <ligand>
        <name>xanthine</name>
        <dbReference type="ChEBI" id="CHEBI:17712"/>
    </ligand>
</feature>
<feature type="binding site" evidence="1">
    <location>
        <begin position="134"/>
        <end position="135"/>
    </location>
    <ligand>
        <name>GMP</name>
        <dbReference type="ChEBI" id="CHEBI:58115"/>
    </ligand>
</feature>
<feature type="binding site" evidence="1">
    <location>
        <position position="135"/>
    </location>
    <ligand>
        <name>guanine</name>
        <dbReference type="ChEBI" id="CHEBI:16235"/>
    </ligand>
</feature>
<feature type="binding site" evidence="1">
    <location>
        <position position="135"/>
    </location>
    <ligand>
        <name>xanthine</name>
        <dbReference type="ChEBI" id="CHEBI:17712"/>
    </ligand>
</feature>
<keyword id="KW-0997">Cell inner membrane</keyword>
<keyword id="KW-1003">Cell membrane</keyword>
<keyword id="KW-0328">Glycosyltransferase</keyword>
<keyword id="KW-0460">Magnesium</keyword>
<keyword id="KW-0472">Membrane</keyword>
<keyword id="KW-0479">Metal-binding</keyword>
<keyword id="KW-0660">Purine salvage</keyword>
<keyword id="KW-0808">Transferase</keyword>
<comment type="function">
    <text evidence="1">Purine salvage pathway enzyme that catalyzes the transfer of the ribosyl-5-phosphate group from 5-phospho-alpha-D-ribose 1-diphosphate (PRPP) to the N9 position of the 6-oxopurines guanine and xanthine to form the corresponding ribonucleotides GMP (guanosine 5'-monophosphate) and XMP (xanthosine 5'-monophosphate), with the release of PPi. To a lesser extent, also acts on hypoxanthine.</text>
</comment>
<comment type="catalytic activity">
    <reaction evidence="1">
        <text>GMP + diphosphate = guanine + 5-phospho-alpha-D-ribose 1-diphosphate</text>
        <dbReference type="Rhea" id="RHEA:25424"/>
        <dbReference type="ChEBI" id="CHEBI:16235"/>
        <dbReference type="ChEBI" id="CHEBI:33019"/>
        <dbReference type="ChEBI" id="CHEBI:58017"/>
        <dbReference type="ChEBI" id="CHEBI:58115"/>
    </reaction>
    <physiologicalReaction direction="right-to-left" evidence="1">
        <dbReference type="Rhea" id="RHEA:25426"/>
    </physiologicalReaction>
</comment>
<comment type="catalytic activity">
    <reaction evidence="1">
        <text>XMP + diphosphate = xanthine + 5-phospho-alpha-D-ribose 1-diphosphate</text>
        <dbReference type="Rhea" id="RHEA:10800"/>
        <dbReference type="ChEBI" id="CHEBI:17712"/>
        <dbReference type="ChEBI" id="CHEBI:33019"/>
        <dbReference type="ChEBI" id="CHEBI:57464"/>
        <dbReference type="ChEBI" id="CHEBI:58017"/>
        <dbReference type="EC" id="2.4.2.22"/>
    </reaction>
    <physiologicalReaction direction="right-to-left" evidence="1">
        <dbReference type="Rhea" id="RHEA:10802"/>
    </physiologicalReaction>
</comment>
<comment type="catalytic activity">
    <reaction evidence="1">
        <text>IMP + diphosphate = hypoxanthine + 5-phospho-alpha-D-ribose 1-diphosphate</text>
        <dbReference type="Rhea" id="RHEA:17973"/>
        <dbReference type="ChEBI" id="CHEBI:17368"/>
        <dbReference type="ChEBI" id="CHEBI:33019"/>
        <dbReference type="ChEBI" id="CHEBI:58017"/>
        <dbReference type="ChEBI" id="CHEBI:58053"/>
    </reaction>
    <physiologicalReaction direction="right-to-left" evidence="1">
        <dbReference type="Rhea" id="RHEA:17975"/>
    </physiologicalReaction>
</comment>
<comment type="cofactor">
    <cofactor evidence="1">
        <name>Mg(2+)</name>
        <dbReference type="ChEBI" id="CHEBI:18420"/>
    </cofactor>
</comment>
<comment type="pathway">
    <text evidence="1">Purine metabolism; GMP biosynthesis via salvage pathway; GMP from guanine: step 1/1.</text>
</comment>
<comment type="pathway">
    <text evidence="1">Purine metabolism; XMP biosynthesis via salvage pathway; XMP from xanthine: step 1/1.</text>
</comment>
<comment type="subunit">
    <text evidence="1">Homotetramer.</text>
</comment>
<comment type="subcellular location">
    <subcellularLocation>
        <location evidence="1">Cell inner membrane</location>
        <topology evidence="1">Peripheral membrane protein</topology>
    </subcellularLocation>
</comment>
<comment type="similarity">
    <text evidence="1">Belongs to the purine/pyrimidine phosphoribosyltransferase family. XGPT subfamily.</text>
</comment>
<accession>B7LNG2</accession>
<gene>
    <name evidence="1" type="primary">gpt</name>
    <name type="ordered locus">EFER_2740</name>
</gene>
<organism>
    <name type="scientific">Escherichia fergusonii (strain ATCC 35469 / DSM 13698 / CCUG 18766 / IAM 14443 / JCM 21226 / LMG 7866 / NBRC 102419 / NCTC 12128 / CDC 0568-73)</name>
    <dbReference type="NCBI Taxonomy" id="585054"/>
    <lineage>
        <taxon>Bacteria</taxon>
        <taxon>Pseudomonadati</taxon>
        <taxon>Pseudomonadota</taxon>
        <taxon>Gammaproteobacteria</taxon>
        <taxon>Enterobacterales</taxon>
        <taxon>Enterobacteriaceae</taxon>
        <taxon>Escherichia</taxon>
    </lineage>
</organism>